<feature type="chain" id="PRO_0000245673" description="NAD(P)H-quinone oxidoreductase subunit I, chloroplastic">
    <location>
        <begin position="1"/>
        <end position="167"/>
    </location>
</feature>
<feature type="domain" description="4Fe-4S ferredoxin-type 1" evidence="1">
    <location>
        <begin position="55"/>
        <end position="84"/>
    </location>
</feature>
<feature type="domain" description="4Fe-4S ferredoxin-type 2" evidence="1">
    <location>
        <begin position="95"/>
        <end position="124"/>
    </location>
</feature>
<feature type="binding site" evidence="1">
    <location>
        <position position="64"/>
    </location>
    <ligand>
        <name>[4Fe-4S] cluster</name>
        <dbReference type="ChEBI" id="CHEBI:49883"/>
        <label>1</label>
    </ligand>
</feature>
<feature type="binding site" evidence="1">
    <location>
        <position position="67"/>
    </location>
    <ligand>
        <name>[4Fe-4S] cluster</name>
        <dbReference type="ChEBI" id="CHEBI:49883"/>
        <label>1</label>
    </ligand>
</feature>
<feature type="binding site" evidence="1">
    <location>
        <position position="70"/>
    </location>
    <ligand>
        <name>[4Fe-4S] cluster</name>
        <dbReference type="ChEBI" id="CHEBI:49883"/>
        <label>1</label>
    </ligand>
</feature>
<feature type="binding site" evidence="1">
    <location>
        <position position="74"/>
    </location>
    <ligand>
        <name>[4Fe-4S] cluster</name>
        <dbReference type="ChEBI" id="CHEBI:49883"/>
        <label>2</label>
    </ligand>
</feature>
<feature type="binding site" evidence="1">
    <location>
        <position position="104"/>
    </location>
    <ligand>
        <name>[4Fe-4S] cluster</name>
        <dbReference type="ChEBI" id="CHEBI:49883"/>
        <label>2</label>
    </ligand>
</feature>
<feature type="binding site" evidence="1">
    <location>
        <position position="107"/>
    </location>
    <ligand>
        <name>[4Fe-4S] cluster</name>
        <dbReference type="ChEBI" id="CHEBI:49883"/>
        <label>2</label>
    </ligand>
</feature>
<feature type="binding site" evidence="1">
    <location>
        <position position="110"/>
    </location>
    <ligand>
        <name>[4Fe-4S] cluster</name>
        <dbReference type="ChEBI" id="CHEBI:49883"/>
        <label>2</label>
    </ligand>
</feature>
<feature type="binding site" evidence="1">
    <location>
        <position position="114"/>
    </location>
    <ligand>
        <name>[4Fe-4S] cluster</name>
        <dbReference type="ChEBI" id="CHEBI:49883"/>
        <label>1</label>
    </ligand>
</feature>
<sequence length="167" mass="19538">MLPMITEFINYGQQTIRAARYIGQGFMITLSHANRLPVTIQYPYEKLITSERFRGRIHFEFDKCIACEVCVRVCPIDLPVVDWKLETDIRKKRLLNYSIDFGICIFCGNCVEYCPTNCLSMTEEYELSTYDRHELNYNQIALGRLPMSVIDDYTIRTISNLPQINNE</sequence>
<geneLocation type="chloroplast"/>
<protein>
    <recommendedName>
        <fullName evidence="1">NAD(P)H-quinone oxidoreductase subunit I, chloroplastic</fullName>
        <ecNumber evidence="1">7.1.1.-</ecNumber>
    </recommendedName>
    <alternativeName>
        <fullName evidence="1">NAD(P)H dehydrogenase subunit I</fullName>
        <shortName evidence="1">NDH subunit I</shortName>
    </alternativeName>
    <alternativeName>
        <fullName evidence="1">NADH-plastoquinone oxidoreductase subunit I</fullName>
    </alternativeName>
</protein>
<evidence type="ECO:0000255" key="1">
    <source>
        <dbReference type="HAMAP-Rule" id="MF_01351"/>
    </source>
</evidence>
<organism>
    <name type="scientific">Solanum bulbocastanum</name>
    <name type="common">Wild potato</name>
    <dbReference type="NCBI Taxonomy" id="147425"/>
    <lineage>
        <taxon>Eukaryota</taxon>
        <taxon>Viridiplantae</taxon>
        <taxon>Streptophyta</taxon>
        <taxon>Embryophyta</taxon>
        <taxon>Tracheophyta</taxon>
        <taxon>Spermatophyta</taxon>
        <taxon>Magnoliopsida</taxon>
        <taxon>eudicotyledons</taxon>
        <taxon>Gunneridae</taxon>
        <taxon>Pentapetalae</taxon>
        <taxon>asterids</taxon>
        <taxon>lamiids</taxon>
        <taxon>Solanales</taxon>
        <taxon>Solanaceae</taxon>
        <taxon>Solanoideae</taxon>
        <taxon>Solaneae</taxon>
        <taxon>Solanum</taxon>
    </lineage>
</organism>
<dbReference type="EC" id="7.1.1.-" evidence="1"/>
<dbReference type="EMBL" id="DQ347958">
    <property type="protein sequence ID" value="ABC56268.1"/>
    <property type="molecule type" value="Genomic_DNA"/>
</dbReference>
<dbReference type="RefSeq" id="YP_538904.1">
    <property type="nucleotide sequence ID" value="NC_007943.1"/>
</dbReference>
<dbReference type="SMR" id="Q2MID3"/>
<dbReference type="GeneID" id="3989493"/>
<dbReference type="GO" id="GO:0009535">
    <property type="term" value="C:chloroplast thylakoid membrane"/>
    <property type="evidence" value="ECO:0007669"/>
    <property type="project" value="UniProtKB-SubCell"/>
</dbReference>
<dbReference type="GO" id="GO:0051539">
    <property type="term" value="F:4 iron, 4 sulfur cluster binding"/>
    <property type="evidence" value="ECO:0007669"/>
    <property type="project" value="UniProtKB-KW"/>
</dbReference>
<dbReference type="GO" id="GO:0005506">
    <property type="term" value="F:iron ion binding"/>
    <property type="evidence" value="ECO:0007669"/>
    <property type="project" value="UniProtKB-UniRule"/>
</dbReference>
<dbReference type="GO" id="GO:0008137">
    <property type="term" value="F:NADH dehydrogenase (ubiquinone) activity"/>
    <property type="evidence" value="ECO:0007669"/>
    <property type="project" value="InterPro"/>
</dbReference>
<dbReference type="GO" id="GO:0048038">
    <property type="term" value="F:quinone binding"/>
    <property type="evidence" value="ECO:0007669"/>
    <property type="project" value="UniProtKB-KW"/>
</dbReference>
<dbReference type="GO" id="GO:0019684">
    <property type="term" value="P:photosynthesis, light reaction"/>
    <property type="evidence" value="ECO:0007669"/>
    <property type="project" value="UniProtKB-UniRule"/>
</dbReference>
<dbReference type="FunFam" id="3.30.70.3270:FF:000006">
    <property type="entry name" value="NAD(P)H-quinone oxidoreductase subunit I, chloroplastic"/>
    <property type="match status" value="1"/>
</dbReference>
<dbReference type="Gene3D" id="3.30.70.3270">
    <property type="match status" value="1"/>
</dbReference>
<dbReference type="HAMAP" id="MF_01351">
    <property type="entry name" value="NDH1_NuoI"/>
    <property type="match status" value="1"/>
</dbReference>
<dbReference type="InterPro" id="IPR017896">
    <property type="entry name" value="4Fe4S_Fe-S-bd"/>
</dbReference>
<dbReference type="InterPro" id="IPR017900">
    <property type="entry name" value="4Fe4S_Fe_S_CS"/>
</dbReference>
<dbReference type="InterPro" id="IPR010226">
    <property type="entry name" value="NADH_quinone_OxRdtase_chainI"/>
</dbReference>
<dbReference type="InterPro" id="IPR004497">
    <property type="entry name" value="NDHI"/>
</dbReference>
<dbReference type="NCBIfam" id="TIGR00403">
    <property type="entry name" value="ndhI"/>
    <property type="match status" value="1"/>
</dbReference>
<dbReference type="NCBIfam" id="TIGR01971">
    <property type="entry name" value="NuoI"/>
    <property type="match status" value="1"/>
</dbReference>
<dbReference type="NCBIfam" id="NF004537">
    <property type="entry name" value="PRK05888.1-3"/>
    <property type="match status" value="1"/>
</dbReference>
<dbReference type="PANTHER" id="PTHR47275">
    <property type="entry name" value="NAD(P)H-QUINONE OXIDOREDUCTASE SUBUNIT I, CHLOROPLASTIC"/>
    <property type="match status" value="1"/>
</dbReference>
<dbReference type="PANTHER" id="PTHR47275:SF1">
    <property type="entry name" value="NAD(P)H-QUINONE OXIDOREDUCTASE SUBUNIT I, CHLOROPLASTIC"/>
    <property type="match status" value="1"/>
</dbReference>
<dbReference type="Pfam" id="PF00037">
    <property type="entry name" value="Fer4"/>
    <property type="match status" value="2"/>
</dbReference>
<dbReference type="SUPFAM" id="SSF54862">
    <property type="entry name" value="4Fe-4S ferredoxins"/>
    <property type="match status" value="1"/>
</dbReference>
<dbReference type="PROSITE" id="PS00198">
    <property type="entry name" value="4FE4S_FER_1"/>
    <property type="match status" value="2"/>
</dbReference>
<dbReference type="PROSITE" id="PS51379">
    <property type="entry name" value="4FE4S_FER_2"/>
    <property type="match status" value="2"/>
</dbReference>
<accession>Q2MID3</accession>
<gene>
    <name evidence="1" type="primary">ndhI</name>
</gene>
<reference key="1">
    <citation type="journal article" date="2006" name="Theor. Appl. Genet.">
        <title>Complete chloroplast genome sequences of Solanum bulbocastanum, Solanum lycopersicum and comparative analyses with other Solanaceae genomes.</title>
        <authorList>
            <person name="Daniell H."/>
            <person name="Lee S.-B."/>
            <person name="Grevich J."/>
            <person name="Saski C."/>
            <person name="Quesada-Vargas T."/>
            <person name="Guda C."/>
            <person name="Tomkins J."/>
            <person name="Jansen R.K."/>
        </authorList>
    </citation>
    <scope>NUCLEOTIDE SEQUENCE [LARGE SCALE GENOMIC DNA]</scope>
    <source>
        <strain>cv. PT29</strain>
    </source>
</reference>
<comment type="function">
    <text evidence="1">NDH shuttles electrons from NAD(P)H:plastoquinone, via FMN and iron-sulfur (Fe-S) centers, to quinones in the photosynthetic chain and possibly in a chloroplast respiratory chain. The immediate electron acceptor for the enzyme in this species is believed to be plastoquinone. Couples the redox reaction to proton translocation, and thus conserves the redox energy in a proton gradient.</text>
</comment>
<comment type="catalytic activity">
    <reaction evidence="1">
        <text>a plastoquinone + NADH + (n+1) H(+)(in) = a plastoquinol + NAD(+) + n H(+)(out)</text>
        <dbReference type="Rhea" id="RHEA:42608"/>
        <dbReference type="Rhea" id="RHEA-COMP:9561"/>
        <dbReference type="Rhea" id="RHEA-COMP:9562"/>
        <dbReference type="ChEBI" id="CHEBI:15378"/>
        <dbReference type="ChEBI" id="CHEBI:17757"/>
        <dbReference type="ChEBI" id="CHEBI:57540"/>
        <dbReference type="ChEBI" id="CHEBI:57945"/>
        <dbReference type="ChEBI" id="CHEBI:62192"/>
    </reaction>
</comment>
<comment type="catalytic activity">
    <reaction evidence="1">
        <text>a plastoquinone + NADPH + (n+1) H(+)(in) = a plastoquinol + NADP(+) + n H(+)(out)</text>
        <dbReference type="Rhea" id="RHEA:42612"/>
        <dbReference type="Rhea" id="RHEA-COMP:9561"/>
        <dbReference type="Rhea" id="RHEA-COMP:9562"/>
        <dbReference type="ChEBI" id="CHEBI:15378"/>
        <dbReference type="ChEBI" id="CHEBI:17757"/>
        <dbReference type="ChEBI" id="CHEBI:57783"/>
        <dbReference type="ChEBI" id="CHEBI:58349"/>
        <dbReference type="ChEBI" id="CHEBI:62192"/>
    </reaction>
</comment>
<comment type="cofactor">
    <cofactor evidence="1">
        <name>[4Fe-4S] cluster</name>
        <dbReference type="ChEBI" id="CHEBI:49883"/>
    </cofactor>
    <text evidence="1">Binds 2 [4Fe-4S] clusters per subunit.</text>
</comment>
<comment type="subunit">
    <text evidence="1">NDH is composed of at least 16 different subunits, 5 of which are encoded in the nucleus.</text>
</comment>
<comment type="subcellular location">
    <subcellularLocation>
        <location evidence="1">Plastid</location>
        <location evidence="1">Chloroplast thylakoid membrane</location>
        <topology evidence="1">Peripheral membrane protein</topology>
    </subcellularLocation>
</comment>
<comment type="similarity">
    <text evidence="1">Belongs to the complex I 23 kDa subunit family.</text>
</comment>
<name>NDHI_SOLBU</name>
<keyword id="KW-0004">4Fe-4S</keyword>
<keyword id="KW-0150">Chloroplast</keyword>
<keyword id="KW-0408">Iron</keyword>
<keyword id="KW-0411">Iron-sulfur</keyword>
<keyword id="KW-0472">Membrane</keyword>
<keyword id="KW-0479">Metal-binding</keyword>
<keyword id="KW-0520">NAD</keyword>
<keyword id="KW-0521">NADP</keyword>
<keyword id="KW-0934">Plastid</keyword>
<keyword id="KW-0618">Plastoquinone</keyword>
<keyword id="KW-0874">Quinone</keyword>
<keyword id="KW-0677">Repeat</keyword>
<keyword id="KW-0793">Thylakoid</keyword>
<keyword id="KW-1278">Translocase</keyword>
<proteinExistence type="inferred from homology"/>